<organism>
    <name type="scientific">Salmonella heidelberg (strain SL476)</name>
    <dbReference type="NCBI Taxonomy" id="454169"/>
    <lineage>
        <taxon>Bacteria</taxon>
        <taxon>Pseudomonadati</taxon>
        <taxon>Pseudomonadota</taxon>
        <taxon>Gammaproteobacteria</taxon>
        <taxon>Enterobacterales</taxon>
        <taxon>Enterobacteriaceae</taxon>
        <taxon>Salmonella</taxon>
    </lineage>
</organism>
<comment type="function">
    <text evidence="1">Catalyzes the transfer of the L-Ara4N moiety of the glycolipid undecaprenyl phosphate-alpha-L-Ara4N to lipid A. The modified arabinose is attached to lipid A and is required for resistance to polymyxin and cationic antimicrobial peptides.</text>
</comment>
<comment type="catalytic activity">
    <reaction evidence="1">
        <text>4-amino-4-deoxy-alpha-L-arabinopyranosyl di-trans,octa-cis-undecaprenyl phosphate + lipid IVA = lipid IIA + di-trans,octa-cis-undecaprenyl phosphate.</text>
        <dbReference type="EC" id="2.4.2.43"/>
    </reaction>
</comment>
<comment type="pathway">
    <text evidence="1">Lipopolysaccharide metabolism; 4-amino-4-deoxy-beta-L-arabinose-lipid A biosynthesis.</text>
</comment>
<comment type="subcellular location">
    <subcellularLocation>
        <location evidence="1">Cell inner membrane</location>
        <topology evidence="1">Multi-pass membrane protein</topology>
    </subcellularLocation>
</comment>
<comment type="similarity">
    <text evidence="1">Belongs to the glycosyltransferase 83 family.</text>
</comment>
<dbReference type="EC" id="2.4.2.43" evidence="1"/>
<dbReference type="EMBL" id="CP001120">
    <property type="protein sequence ID" value="ACF69403.1"/>
    <property type="molecule type" value="Genomic_DNA"/>
</dbReference>
<dbReference type="RefSeq" id="WP_000978041.1">
    <property type="nucleotide sequence ID" value="NC_011083.1"/>
</dbReference>
<dbReference type="SMR" id="B4TBG8"/>
<dbReference type="CAZy" id="GT83">
    <property type="family name" value="Glycosyltransferase Family 83"/>
</dbReference>
<dbReference type="KEGG" id="seh:SeHA_C2541"/>
<dbReference type="HOGENOM" id="CLU_019200_2_1_6"/>
<dbReference type="UniPathway" id="UPA00037"/>
<dbReference type="Proteomes" id="UP000001866">
    <property type="component" value="Chromosome"/>
</dbReference>
<dbReference type="GO" id="GO:0005886">
    <property type="term" value="C:plasma membrane"/>
    <property type="evidence" value="ECO:0007669"/>
    <property type="project" value="UniProtKB-SubCell"/>
</dbReference>
<dbReference type="GO" id="GO:0103015">
    <property type="term" value="F:4-amino-4-deoxy-L-arabinose transferase activity"/>
    <property type="evidence" value="ECO:0007669"/>
    <property type="project" value="UniProtKB-EC"/>
</dbReference>
<dbReference type="GO" id="GO:0000030">
    <property type="term" value="F:mannosyltransferase activity"/>
    <property type="evidence" value="ECO:0007669"/>
    <property type="project" value="InterPro"/>
</dbReference>
<dbReference type="GO" id="GO:0009245">
    <property type="term" value="P:lipid A biosynthetic process"/>
    <property type="evidence" value="ECO:0007669"/>
    <property type="project" value="UniProtKB-UniRule"/>
</dbReference>
<dbReference type="GO" id="GO:0009103">
    <property type="term" value="P:lipopolysaccharide biosynthetic process"/>
    <property type="evidence" value="ECO:0007669"/>
    <property type="project" value="UniProtKB-KW"/>
</dbReference>
<dbReference type="GO" id="GO:0006493">
    <property type="term" value="P:protein O-linked glycosylation"/>
    <property type="evidence" value="ECO:0007669"/>
    <property type="project" value="InterPro"/>
</dbReference>
<dbReference type="GO" id="GO:0010041">
    <property type="term" value="P:response to iron(III) ion"/>
    <property type="evidence" value="ECO:0007669"/>
    <property type="project" value="TreeGrafter"/>
</dbReference>
<dbReference type="HAMAP" id="MF_01165">
    <property type="entry name" value="ArnT_transfer"/>
    <property type="match status" value="1"/>
</dbReference>
<dbReference type="InterPro" id="IPR022839">
    <property type="entry name" value="ArnT_tfrase"/>
</dbReference>
<dbReference type="InterPro" id="IPR003342">
    <property type="entry name" value="Glyco_trans_39/83"/>
</dbReference>
<dbReference type="InterPro" id="IPR050297">
    <property type="entry name" value="LipidA_mod_glycosyltrf_83"/>
</dbReference>
<dbReference type="NCBIfam" id="NF009784">
    <property type="entry name" value="PRK13279.1"/>
    <property type="match status" value="1"/>
</dbReference>
<dbReference type="PANTHER" id="PTHR33908">
    <property type="entry name" value="MANNOSYLTRANSFERASE YKCB-RELATED"/>
    <property type="match status" value="1"/>
</dbReference>
<dbReference type="PANTHER" id="PTHR33908:SF3">
    <property type="entry name" value="UNDECAPRENYL PHOSPHATE-ALPHA-4-AMINO-4-DEOXY-L-ARABINOSE ARABINOSYL TRANSFERASE"/>
    <property type="match status" value="1"/>
</dbReference>
<dbReference type="Pfam" id="PF02366">
    <property type="entry name" value="PMT"/>
    <property type="match status" value="1"/>
</dbReference>
<sequence>MMKSIRYYLAFAAFIALYYVIPVNSRLLWQPDETRYAEISREMLASGDWIVPHFLGLRYFEKPIAGYWINSLGQWLFGATNFGVRAGAILTTLLAAALVAWLTFRLWRDKRTALLASVIFLSLFAVYSIGTYAVLDPMIALWLTAGMCCFWQGMQATTRTGKIGMFLLLGATCGLGVLTKGFLALAVPVVSVLPWVIVQKRWKDFLLYGWLAVLSCFMVVLPWAIAIARREADFWHYFFWVEHIQRFAMSDAQHKAPFWYYLPVLLAGSLPWLGLLPGALKLGWRERNGAFYLLGWTIMPLLFFSIAKGKLPTYVLSCFAPIAILMARFVLHNVKEGVAALRVNGGINLVFGLVGIVAAFVVSSWGPLKSPVWTHIETYKVFCVWGVFTVWAFVGWYSLCHSQKYLLPAFCPLGLALLFGFSIPDRVMESKQPQFFVEMTQAPLASSRYILADNVGVAAGLAWSLKRDDIMLYGHAGELRYGLSYPDVQDKFVKADDFNAWLNQHRQEGIITLVLSIAKDEDISALSLPPADNIDYQGRLVLIQYRPK</sequence>
<keyword id="KW-0997">Cell inner membrane</keyword>
<keyword id="KW-1003">Cell membrane</keyword>
<keyword id="KW-0328">Glycosyltransferase</keyword>
<keyword id="KW-0441">Lipid A biosynthesis</keyword>
<keyword id="KW-0444">Lipid biosynthesis</keyword>
<keyword id="KW-0443">Lipid metabolism</keyword>
<keyword id="KW-0448">Lipopolysaccharide biosynthesis</keyword>
<keyword id="KW-0472">Membrane</keyword>
<keyword id="KW-0808">Transferase</keyword>
<keyword id="KW-0812">Transmembrane</keyword>
<keyword id="KW-1133">Transmembrane helix</keyword>
<gene>
    <name evidence="1" type="primary">arnT</name>
    <name type="ordered locus">SeHA_C2541</name>
</gene>
<accession>B4TBG8</accession>
<proteinExistence type="inferred from homology"/>
<name>ARNT_SALHS</name>
<feature type="chain" id="PRO_0000380029" description="Undecaprenyl phosphate-alpha-4-amino-4-deoxy-L-arabinose arabinosyl transferase">
    <location>
        <begin position="1"/>
        <end position="548"/>
    </location>
</feature>
<feature type="transmembrane region" description="Helical" evidence="1">
    <location>
        <begin position="9"/>
        <end position="29"/>
    </location>
</feature>
<feature type="transmembrane region" description="Helical" evidence="1">
    <location>
        <begin position="82"/>
        <end position="102"/>
    </location>
</feature>
<feature type="transmembrane region" description="Helical" evidence="1">
    <location>
        <begin position="114"/>
        <end position="134"/>
    </location>
</feature>
<feature type="transmembrane region" description="Helical" evidence="1">
    <location>
        <begin position="137"/>
        <end position="157"/>
    </location>
</feature>
<feature type="transmembrane region" description="Helical" evidence="1">
    <location>
        <begin position="163"/>
        <end position="185"/>
    </location>
</feature>
<feature type="transmembrane region" description="Helical" evidence="1">
    <location>
        <begin position="205"/>
        <end position="225"/>
    </location>
</feature>
<feature type="transmembrane region" description="Helical" evidence="1">
    <location>
        <begin position="256"/>
        <end position="276"/>
    </location>
</feature>
<feature type="transmembrane region" description="Helical" evidence="1">
    <location>
        <begin position="289"/>
        <end position="309"/>
    </location>
</feature>
<feature type="transmembrane region" description="Helical" evidence="1">
    <location>
        <begin position="311"/>
        <end position="331"/>
    </location>
</feature>
<feature type="transmembrane region" description="Helical" evidence="1">
    <location>
        <begin position="345"/>
        <end position="365"/>
    </location>
</feature>
<feature type="transmembrane region" description="Helical" evidence="1">
    <location>
        <begin position="381"/>
        <end position="401"/>
    </location>
</feature>
<feature type="transmembrane region" description="Helical" evidence="1">
    <location>
        <begin position="405"/>
        <end position="425"/>
    </location>
</feature>
<protein>
    <recommendedName>
        <fullName evidence="1">Undecaprenyl phosphate-alpha-4-amino-4-deoxy-L-arabinose arabinosyl transferase</fullName>
        <ecNumber evidence="1">2.4.2.43</ecNumber>
    </recommendedName>
    <alternativeName>
        <fullName evidence="1">4-amino-4-deoxy-L-arabinose lipid A transferase</fullName>
    </alternativeName>
    <alternativeName>
        <fullName evidence="1">Lipid IV(A) 4-amino-4-deoxy-L-arabinosyltransferase</fullName>
    </alternativeName>
    <alternativeName>
        <fullName evidence="1">Undecaprenyl phosphate-alpha-L-Ara4N transferase</fullName>
    </alternativeName>
</protein>
<reference key="1">
    <citation type="journal article" date="2011" name="J. Bacteriol.">
        <title>Comparative genomics of 28 Salmonella enterica isolates: evidence for CRISPR-mediated adaptive sublineage evolution.</title>
        <authorList>
            <person name="Fricke W.F."/>
            <person name="Mammel M.K."/>
            <person name="McDermott P.F."/>
            <person name="Tartera C."/>
            <person name="White D.G."/>
            <person name="Leclerc J.E."/>
            <person name="Ravel J."/>
            <person name="Cebula T.A."/>
        </authorList>
    </citation>
    <scope>NUCLEOTIDE SEQUENCE [LARGE SCALE GENOMIC DNA]</scope>
    <source>
        <strain>SL476</strain>
    </source>
</reference>
<evidence type="ECO:0000255" key="1">
    <source>
        <dbReference type="HAMAP-Rule" id="MF_01165"/>
    </source>
</evidence>